<comment type="function">
    <text evidence="1">G-protein coupled receptor for glutamate. Ligand binding causes a conformation change that triggers signaling via guanine nucleotide-binding proteins (G proteins) and modulates the activity of down-stream effectors. Signaling inhibits adenylate cyclase activity (By similarity).</text>
</comment>
<comment type="subunit">
    <text evidence="1">Interacts with PICK1.</text>
</comment>
<comment type="subcellular location">
    <subcellularLocation>
        <location evidence="1">Cell membrane</location>
        <topology evidence="1">Multi-pass membrane protein</topology>
    </subcellularLocation>
</comment>
<comment type="similarity">
    <text evidence="3">Belongs to the G-protein coupled receptor 3 family.</text>
</comment>
<feature type="signal peptide" evidence="2">
    <location>
        <begin position="1"/>
        <end position="32"/>
    </location>
</feature>
<feature type="chain" id="PRO_0000250700" description="Metabotropic glutamate receptor 4">
    <location>
        <begin position="33"/>
        <end position="912"/>
    </location>
</feature>
<feature type="topological domain" description="Extracellular" evidence="2">
    <location>
        <begin position="33"/>
        <end position="586"/>
    </location>
</feature>
<feature type="transmembrane region" description="Helical; Name=1" evidence="2">
    <location>
        <begin position="587"/>
        <end position="607"/>
    </location>
</feature>
<feature type="topological domain" description="Cytoplasmic" evidence="2">
    <location>
        <begin position="608"/>
        <end position="624"/>
    </location>
</feature>
<feature type="transmembrane region" description="Helical; Name=2" evidence="2">
    <location>
        <begin position="625"/>
        <end position="645"/>
    </location>
</feature>
<feature type="topological domain" description="Extracellular" evidence="2">
    <location>
        <begin position="646"/>
        <end position="653"/>
    </location>
</feature>
<feature type="transmembrane region" description="Helical; Name=3" evidence="2">
    <location>
        <begin position="654"/>
        <end position="671"/>
    </location>
</feature>
<feature type="topological domain" description="Cytoplasmic" evidence="2">
    <location>
        <begin position="672"/>
        <end position="699"/>
    </location>
</feature>
<feature type="transmembrane region" description="Helical; Name=4" evidence="2">
    <location>
        <begin position="700"/>
        <end position="720"/>
    </location>
</feature>
<feature type="topological domain" description="Extracellular" evidence="2">
    <location>
        <begin position="721"/>
        <end position="751"/>
    </location>
</feature>
<feature type="transmembrane region" description="Helical; Name=5" evidence="2">
    <location>
        <begin position="752"/>
        <end position="772"/>
    </location>
</feature>
<feature type="topological domain" description="Cytoplasmic" evidence="2">
    <location>
        <begin position="773"/>
        <end position="786"/>
    </location>
</feature>
<feature type="transmembrane region" description="Helical; Name=SP 6" evidence="2">
    <location>
        <begin position="787"/>
        <end position="807"/>
    </location>
</feature>
<feature type="topological domain" description="Extracellular" evidence="2">
    <location>
        <begin position="808"/>
        <end position="826"/>
    </location>
</feature>
<feature type="transmembrane region" description="Helical; Name=7" evidence="2">
    <location>
        <begin position="827"/>
        <end position="847"/>
    </location>
</feature>
<feature type="topological domain" description="Cytoplasmic" evidence="2">
    <location>
        <begin position="848"/>
        <end position="912"/>
    </location>
</feature>
<feature type="binding site" evidence="1">
    <location>
        <position position="159"/>
    </location>
    <ligand>
        <name>L-glutamate</name>
        <dbReference type="ChEBI" id="CHEBI:29985"/>
    </ligand>
</feature>
<feature type="binding site" evidence="1">
    <location>
        <begin position="180"/>
        <end position="182"/>
    </location>
    <ligand>
        <name>L-glutamate</name>
        <dbReference type="ChEBI" id="CHEBI:29985"/>
    </ligand>
</feature>
<feature type="binding site" evidence="1">
    <location>
        <position position="230"/>
    </location>
    <ligand>
        <name>L-glutamate</name>
        <dbReference type="ChEBI" id="CHEBI:29985"/>
    </ligand>
</feature>
<feature type="binding site" evidence="1">
    <location>
        <position position="312"/>
    </location>
    <ligand>
        <name>L-glutamate</name>
        <dbReference type="ChEBI" id="CHEBI:29985"/>
    </ligand>
</feature>
<feature type="binding site" evidence="1">
    <location>
        <position position="405"/>
    </location>
    <ligand>
        <name>L-glutamate</name>
        <dbReference type="ChEBI" id="CHEBI:29985"/>
    </ligand>
</feature>
<feature type="glycosylation site" description="N-linked (GlcNAc...) asparagine" evidence="2">
    <location>
        <position position="98"/>
    </location>
</feature>
<feature type="glycosylation site" description="N-linked (GlcNAc...) asparagine" evidence="2">
    <location>
        <position position="301"/>
    </location>
</feature>
<feature type="glycosylation site" description="N-linked (GlcNAc...) asparagine" evidence="2">
    <location>
        <position position="454"/>
    </location>
</feature>
<feature type="glycosylation site" description="N-linked (GlcNAc...) asparagine" evidence="2">
    <location>
        <position position="484"/>
    </location>
</feature>
<feature type="glycosylation site" description="N-linked (GlcNAc...) asparagine" evidence="2">
    <location>
        <position position="569"/>
    </location>
</feature>
<feature type="disulfide bond" evidence="1">
    <location>
        <begin position="67"/>
        <end position="109"/>
    </location>
</feature>
<feature type="disulfide bond" evidence="1">
    <location>
        <begin position="249"/>
        <end position="538"/>
    </location>
</feature>
<feature type="disulfide bond" evidence="1">
    <location>
        <begin position="372"/>
        <end position="388"/>
    </location>
</feature>
<feature type="disulfide bond" evidence="1">
    <location>
        <begin position="428"/>
        <end position="435"/>
    </location>
</feature>
<feature type="disulfide bond" evidence="1">
    <location>
        <begin position="520"/>
        <end position="539"/>
    </location>
</feature>
<feature type="disulfide bond" evidence="1">
    <location>
        <begin position="524"/>
        <end position="542"/>
    </location>
</feature>
<feature type="disulfide bond" evidence="1">
    <location>
        <begin position="545"/>
        <end position="557"/>
    </location>
</feature>
<feature type="disulfide bond" evidence="1">
    <location>
        <begin position="560"/>
        <end position="573"/>
    </location>
</feature>
<gene>
    <name type="primary">GRM4</name>
</gene>
<accession>Q1ZZH0</accession>
<dbReference type="EMBL" id="DQ417735">
    <property type="protein sequence ID" value="ABD74420.1"/>
    <property type="molecule type" value="mRNA"/>
</dbReference>
<dbReference type="RefSeq" id="NP_001271577.1">
    <property type="nucleotide sequence ID" value="NM_001284648.1"/>
</dbReference>
<dbReference type="SMR" id="Q1ZZH0"/>
<dbReference type="STRING" id="9541.ENSMFAP00000023962"/>
<dbReference type="GlyCosmos" id="Q1ZZH0">
    <property type="glycosylation" value="5 sites, No reported glycans"/>
</dbReference>
<dbReference type="eggNOG" id="KOG1056">
    <property type="taxonomic scope" value="Eukaryota"/>
</dbReference>
<dbReference type="Proteomes" id="UP000233100">
    <property type="component" value="Unplaced"/>
</dbReference>
<dbReference type="GO" id="GO:0005886">
    <property type="term" value="C:plasma membrane"/>
    <property type="evidence" value="ECO:0007669"/>
    <property type="project" value="UniProtKB-SubCell"/>
</dbReference>
<dbReference type="GO" id="GO:0004930">
    <property type="term" value="F:G protein-coupled receptor activity"/>
    <property type="evidence" value="ECO:0000250"/>
    <property type="project" value="UniProtKB"/>
</dbReference>
<dbReference type="GO" id="GO:0008066">
    <property type="term" value="F:glutamate receptor activity"/>
    <property type="evidence" value="ECO:0000250"/>
    <property type="project" value="UniProtKB"/>
</dbReference>
<dbReference type="GO" id="GO:0007196">
    <property type="term" value="P:adenylate cyclase-inhibiting G protein-coupled glutamate receptor signaling pathway"/>
    <property type="evidence" value="ECO:0000250"/>
    <property type="project" value="UniProtKB"/>
</dbReference>
<dbReference type="CDD" id="cd15452">
    <property type="entry name" value="7tmC_mGluR4"/>
    <property type="match status" value="1"/>
</dbReference>
<dbReference type="CDD" id="cd06376">
    <property type="entry name" value="PBP1_mGluR_groupIII"/>
    <property type="match status" value="1"/>
</dbReference>
<dbReference type="FunFam" id="3.40.50.2300:FF:000196">
    <property type="entry name" value="Glutamate metabotropic receptor 7"/>
    <property type="match status" value="1"/>
</dbReference>
<dbReference type="FunFam" id="3.40.50.2300:FF:000009">
    <property type="entry name" value="Glutamate receptor, metabotropic 4"/>
    <property type="match status" value="1"/>
</dbReference>
<dbReference type="FunFam" id="2.10.50.30:FF:000001">
    <property type="entry name" value="metabotropic glutamate receptor 1"/>
    <property type="match status" value="1"/>
</dbReference>
<dbReference type="FunFam" id="3.40.50.2300:FF:000176">
    <property type="entry name" value="metabotropic glutamate receptor 7"/>
    <property type="match status" value="1"/>
</dbReference>
<dbReference type="Gene3D" id="3.40.50.2300">
    <property type="match status" value="2"/>
</dbReference>
<dbReference type="Gene3D" id="2.10.50.30">
    <property type="entry name" value="GPCR, family 3, nine cysteines domain"/>
    <property type="match status" value="1"/>
</dbReference>
<dbReference type="InterPro" id="IPR001828">
    <property type="entry name" value="ANF_lig-bd_rcpt"/>
</dbReference>
<dbReference type="InterPro" id="IPR000337">
    <property type="entry name" value="GPCR_3"/>
</dbReference>
<dbReference type="InterPro" id="IPR011500">
    <property type="entry name" value="GPCR_3_9-Cys_dom"/>
</dbReference>
<dbReference type="InterPro" id="IPR038550">
    <property type="entry name" value="GPCR_3_9-Cys_sf"/>
</dbReference>
<dbReference type="InterPro" id="IPR017978">
    <property type="entry name" value="GPCR_3_C"/>
</dbReference>
<dbReference type="InterPro" id="IPR017979">
    <property type="entry name" value="GPCR_3_CS"/>
</dbReference>
<dbReference type="InterPro" id="IPR001786">
    <property type="entry name" value="GPCR_3_mGluR4"/>
</dbReference>
<dbReference type="InterPro" id="IPR000162">
    <property type="entry name" value="GPCR_3_mtglu_rcpt"/>
</dbReference>
<dbReference type="InterPro" id="IPR050726">
    <property type="entry name" value="mGluR"/>
</dbReference>
<dbReference type="InterPro" id="IPR028082">
    <property type="entry name" value="Peripla_BP_I"/>
</dbReference>
<dbReference type="PANTHER" id="PTHR24060">
    <property type="entry name" value="METABOTROPIC GLUTAMATE RECEPTOR"/>
    <property type="match status" value="1"/>
</dbReference>
<dbReference type="Pfam" id="PF00003">
    <property type="entry name" value="7tm_3"/>
    <property type="match status" value="1"/>
</dbReference>
<dbReference type="Pfam" id="PF01094">
    <property type="entry name" value="ANF_receptor"/>
    <property type="match status" value="1"/>
</dbReference>
<dbReference type="Pfam" id="PF07562">
    <property type="entry name" value="NCD3G"/>
    <property type="match status" value="1"/>
</dbReference>
<dbReference type="PRINTS" id="PR00248">
    <property type="entry name" value="GPCRMGR"/>
</dbReference>
<dbReference type="PRINTS" id="PR01054">
    <property type="entry name" value="MTABOTROPC4R"/>
</dbReference>
<dbReference type="PRINTS" id="PR00593">
    <property type="entry name" value="MTABOTROPICR"/>
</dbReference>
<dbReference type="SUPFAM" id="SSF53822">
    <property type="entry name" value="Periplasmic binding protein-like I"/>
    <property type="match status" value="1"/>
</dbReference>
<dbReference type="PROSITE" id="PS00979">
    <property type="entry name" value="G_PROTEIN_RECEP_F3_1"/>
    <property type="match status" value="1"/>
</dbReference>
<dbReference type="PROSITE" id="PS00980">
    <property type="entry name" value="G_PROTEIN_RECEP_F3_2"/>
    <property type="match status" value="1"/>
</dbReference>
<dbReference type="PROSITE" id="PS00981">
    <property type="entry name" value="G_PROTEIN_RECEP_F3_3"/>
    <property type="match status" value="1"/>
</dbReference>
<dbReference type="PROSITE" id="PS50259">
    <property type="entry name" value="G_PROTEIN_RECEP_F3_4"/>
    <property type="match status" value="1"/>
</dbReference>
<protein>
    <recommendedName>
        <fullName>Metabotropic glutamate receptor 4</fullName>
        <shortName>mGluR4</shortName>
    </recommendedName>
</protein>
<reference key="1">
    <citation type="journal article" date="2006" name="Mol. Vis.">
        <title>Expression and sequences of genes encoding glutamate receptors and transporters in primate retina determined using 3'-end amplification polymerase chain reaction.</title>
        <authorList>
            <person name="Hanna M.C."/>
            <person name="Calkins D.J."/>
        </authorList>
    </citation>
    <scope>NUCLEOTIDE SEQUENCE [MRNA]</scope>
    <source>
        <tissue>Retina</tissue>
    </source>
</reference>
<sequence>MPGKSGLGWWWARLPLCLLLSLYGPWMPSSLGKPKGHPHMNSIRIDGDITLGGLFPVHGRGSEGKACGELKKEKGIHRLEAMLFALDRINNDPDLLPNITLGARILDTCSRDTHALEQSLTFVQALIEKDGTEVRCGSGGPPIITKPERVVGVIGASGSSVSIMVANILRLFKIPQISYASTAPDLSDNSRYDFFSRVVPSDTYQAQAMVDIVRALKWNYVSTVASEGSYGESGVEAFIQKSREDGGVCIAQSVKIPREPKAGEFDKIIRRLLETSNARAVIIFANEDDIRRVLEAARRANQTGHFFWMGSDSWGSKIAPVLHLEEVAEGAVTILPKRMSVRGFDRYFSSRTLDNNRRNIWFAEFWEDNFHCKLSRHALKKGSHVKKCTNRERIGQDSAYEQEGKVQFVIDAVYAMGHALHAMHRDLCPGRVGLCPRMDPVDGTQLLKYIRNVNFSGIAGNPVTFNENGDAPGRYDIYQYQLRNDSAEYKVIGSWTDHLHLRIERMHWPGSGQQLPRSICSLPCQPGERKKTVKGMPCCWHCEPCTGYQYQVDRYTCKTCPYDMRPTENRTGCRPIPIIKLEWDSPWAVLPLFLAVVGIAATLFVVITFVRYNDTPIVKASGRELSYVLLAGIFLCYATTFLMIAEPDLGTCSLRRIFLGLGMSISYAALLTKTNRIYRIFEQGKRSVSAPRFISPASQLAITFSLISLQLLGICVWFVVDPSHSVVDFQDQRTLDPRFARGVLKCDISDLSLICLLGYSMLLMVTCTVYAIKTRGVPETFNEAKPIGFTMYTTCIVWLAFIPIFFGTSQSADKLYIQTTTLTVSVSLSASVSLGMLYMPKVYIILFHPEQNVPKRKRSLKAVVTAATMSNKFTQKGNFRPNGEAKSELCENLEAPALATKQTYVTYTNHAI</sequence>
<keyword id="KW-1003">Cell membrane</keyword>
<keyword id="KW-1015">Disulfide bond</keyword>
<keyword id="KW-0297">G-protein coupled receptor</keyword>
<keyword id="KW-0325">Glycoprotein</keyword>
<keyword id="KW-0472">Membrane</keyword>
<keyword id="KW-0675">Receptor</keyword>
<keyword id="KW-1185">Reference proteome</keyword>
<keyword id="KW-0732">Signal</keyword>
<keyword id="KW-0807">Transducer</keyword>
<keyword id="KW-0812">Transmembrane</keyword>
<keyword id="KW-1133">Transmembrane helix</keyword>
<name>GRM4_MACFA</name>
<proteinExistence type="evidence at transcript level"/>
<evidence type="ECO:0000250" key="1"/>
<evidence type="ECO:0000255" key="2"/>
<evidence type="ECO:0000305" key="3"/>
<organism>
    <name type="scientific">Macaca fascicularis</name>
    <name type="common">Crab-eating macaque</name>
    <name type="synonym">Cynomolgus monkey</name>
    <dbReference type="NCBI Taxonomy" id="9541"/>
    <lineage>
        <taxon>Eukaryota</taxon>
        <taxon>Metazoa</taxon>
        <taxon>Chordata</taxon>
        <taxon>Craniata</taxon>
        <taxon>Vertebrata</taxon>
        <taxon>Euteleostomi</taxon>
        <taxon>Mammalia</taxon>
        <taxon>Eutheria</taxon>
        <taxon>Euarchontoglires</taxon>
        <taxon>Primates</taxon>
        <taxon>Haplorrhini</taxon>
        <taxon>Catarrhini</taxon>
        <taxon>Cercopithecidae</taxon>
        <taxon>Cercopithecinae</taxon>
        <taxon>Macaca</taxon>
    </lineage>
</organism>